<gene>
    <name evidence="1" type="primary">rplN</name>
    <name type="ordered locus">FTW_1748</name>
</gene>
<proteinExistence type="inferred from homology"/>
<organism>
    <name type="scientific">Francisella tularensis subsp. tularensis (strain WY96-3418)</name>
    <dbReference type="NCBI Taxonomy" id="418136"/>
    <lineage>
        <taxon>Bacteria</taxon>
        <taxon>Pseudomonadati</taxon>
        <taxon>Pseudomonadota</taxon>
        <taxon>Gammaproteobacteria</taxon>
        <taxon>Thiotrichales</taxon>
        <taxon>Francisellaceae</taxon>
        <taxon>Francisella</taxon>
    </lineage>
</organism>
<sequence>MIQMQTELQVADNSGAKRVECIKVLGGSHRRYASIGDVIKVTVKEASPRGKAKKGSVYNAVVVRTAKGVRRKDGSKVRFDGNAAVLLNANGQPIGTRIFGPVTRELRTEKFMKIVSLAPEVL</sequence>
<name>RL14_FRATW</name>
<feature type="chain" id="PRO_1000055585" description="Large ribosomal subunit protein uL14">
    <location>
        <begin position="1"/>
        <end position="122"/>
    </location>
</feature>
<keyword id="KW-0687">Ribonucleoprotein</keyword>
<keyword id="KW-0689">Ribosomal protein</keyword>
<keyword id="KW-0694">RNA-binding</keyword>
<keyword id="KW-0699">rRNA-binding</keyword>
<evidence type="ECO:0000255" key="1">
    <source>
        <dbReference type="HAMAP-Rule" id="MF_01367"/>
    </source>
</evidence>
<evidence type="ECO:0000305" key="2"/>
<dbReference type="EMBL" id="CP000608">
    <property type="protein sequence ID" value="ABO47424.1"/>
    <property type="molecule type" value="Genomic_DNA"/>
</dbReference>
<dbReference type="RefSeq" id="WP_003014346.1">
    <property type="nucleotide sequence ID" value="NC_009257.1"/>
</dbReference>
<dbReference type="SMR" id="A4IZS4"/>
<dbReference type="GeneID" id="75264251"/>
<dbReference type="KEGG" id="ftw:FTW_1748"/>
<dbReference type="HOGENOM" id="CLU_095071_2_1_6"/>
<dbReference type="GO" id="GO:0022625">
    <property type="term" value="C:cytosolic large ribosomal subunit"/>
    <property type="evidence" value="ECO:0007669"/>
    <property type="project" value="TreeGrafter"/>
</dbReference>
<dbReference type="GO" id="GO:0070180">
    <property type="term" value="F:large ribosomal subunit rRNA binding"/>
    <property type="evidence" value="ECO:0007669"/>
    <property type="project" value="TreeGrafter"/>
</dbReference>
<dbReference type="GO" id="GO:0003735">
    <property type="term" value="F:structural constituent of ribosome"/>
    <property type="evidence" value="ECO:0007669"/>
    <property type="project" value="InterPro"/>
</dbReference>
<dbReference type="GO" id="GO:0006412">
    <property type="term" value="P:translation"/>
    <property type="evidence" value="ECO:0007669"/>
    <property type="project" value="UniProtKB-UniRule"/>
</dbReference>
<dbReference type="CDD" id="cd00337">
    <property type="entry name" value="Ribosomal_uL14"/>
    <property type="match status" value="1"/>
</dbReference>
<dbReference type="FunFam" id="2.40.150.20:FF:000001">
    <property type="entry name" value="50S ribosomal protein L14"/>
    <property type="match status" value="1"/>
</dbReference>
<dbReference type="Gene3D" id="2.40.150.20">
    <property type="entry name" value="Ribosomal protein L14"/>
    <property type="match status" value="1"/>
</dbReference>
<dbReference type="HAMAP" id="MF_01367">
    <property type="entry name" value="Ribosomal_uL14"/>
    <property type="match status" value="1"/>
</dbReference>
<dbReference type="InterPro" id="IPR000218">
    <property type="entry name" value="Ribosomal_uL14"/>
</dbReference>
<dbReference type="InterPro" id="IPR005745">
    <property type="entry name" value="Ribosomal_uL14_bac-type"/>
</dbReference>
<dbReference type="InterPro" id="IPR019972">
    <property type="entry name" value="Ribosomal_uL14_CS"/>
</dbReference>
<dbReference type="InterPro" id="IPR036853">
    <property type="entry name" value="Ribosomal_uL14_sf"/>
</dbReference>
<dbReference type="NCBIfam" id="TIGR01067">
    <property type="entry name" value="rplN_bact"/>
    <property type="match status" value="1"/>
</dbReference>
<dbReference type="PANTHER" id="PTHR11761">
    <property type="entry name" value="50S/60S RIBOSOMAL PROTEIN L14/L23"/>
    <property type="match status" value="1"/>
</dbReference>
<dbReference type="PANTHER" id="PTHR11761:SF3">
    <property type="entry name" value="LARGE RIBOSOMAL SUBUNIT PROTEIN UL14M"/>
    <property type="match status" value="1"/>
</dbReference>
<dbReference type="Pfam" id="PF00238">
    <property type="entry name" value="Ribosomal_L14"/>
    <property type="match status" value="1"/>
</dbReference>
<dbReference type="SMART" id="SM01374">
    <property type="entry name" value="Ribosomal_L14"/>
    <property type="match status" value="1"/>
</dbReference>
<dbReference type="SUPFAM" id="SSF50193">
    <property type="entry name" value="Ribosomal protein L14"/>
    <property type="match status" value="1"/>
</dbReference>
<dbReference type="PROSITE" id="PS00049">
    <property type="entry name" value="RIBOSOMAL_L14"/>
    <property type="match status" value="1"/>
</dbReference>
<reference key="1">
    <citation type="journal article" date="2007" name="PLoS ONE">
        <title>Complete genomic characterization of a pathogenic A.II strain of Francisella tularensis subspecies tularensis.</title>
        <authorList>
            <person name="Beckstrom-Sternberg S.M."/>
            <person name="Auerbach R.K."/>
            <person name="Godbole S."/>
            <person name="Pearson J.V."/>
            <person name="Beckstrom-Sternberg J.S."/>
            <person name="Deng Z."/>
            <person name="Munk C."/>
            <person name="Kubota K."/>
            <person name="Zhou Y."/>
            <person name="Bruce D."/>
            <person name="Noronha J."/>
            <person name="Scheuermann R.H."/>
            <person name="Wang A."/>
            <person name="Wei X."/>
            <person name="Wang J."/>
            <person name="Hao J."/>
            <person name="Wagner D.M."/>
            <person name="Brettin T.S."/>
            <person name="Brown N."/>
            <person name="Gilna P."/>
            <person name="Keim P.S."/>
        </authorList>
    </citation>
    <scope>NUCLEOTIDE SEQUENCE [LARGE SCALE GENOMIC DNA]</scope>
    <source>
        <strain>WY96-3418</strain>
    </source>
</reference>
<comment type="function">
    <text evidence="1">Binds to 23S rRNA. Forms part of two intersubunit bridges in the 70S ribosome.</text>
</comment>
<comment type="subunit">
    <text evidence="1">Part of the 50S ribosomal subunit. Forms a cluster with proteins L3 and L19. In the 70S ribosome, L14 and L19 interact and together make contacts with the 16S rRNA in bridges B5 and B8.</text>
</comment>
<comment type="similarity">
    <text evidence="1">Belongs to the universal ribosomal protein uL14 family.</text>
</comment>
<accession>A4IZS4</accession>
<protein>
    <recommendedName>
        <fullName evidence="1">Large ribosomal subunit protein uL14</fullName>
    </recommendedName>
    <alternativeName>
        <fullName evidence="2">50S ribosomal protein L14</fullName>
    </alternativeName>
</protein>